<reference key="1">
    <citation type="journal article" date="2005" name="Nat. Biotechnol.">
        <title>The complete genome sequence of the meat-borne lactic acid bacterium Lactobacillus sakei 23K.</title>
        <authorList>
            <person name="Chaillou S."/>
            <person name="Champomier-Verges M.-C."/>
            <person name="Cornet M."/>
            <person name="Crutz-Le Coq A.-M."/>
            <person name="Dudez A.-M."/>
            <person name="Martin V."/>
            <person name="Beaufils S."/>
            <person name="Darbon-Rongere E."/>
            <person name="Bossy R."/>
            <person name="Loux V."/>
            <person name="Zagorec M."/>
        </authorList>
    </citation>
    <scope>NUCLEOTIDE SEQUENCE [LARGE SCALE GENOMIC DNA]</scope>
    <source>
        <strain>23K</strain>
    </source>
</reference>
<accession>Q38W81</accession>
<name>IF2_LATSS</name>
<protein>
    <recommendedName>
        <fullName evidence="2">Translation initiation factor IF-2</fullName>
    </recommendedName>
</protein>
<dbReference type="EMBL" id="CR936503">
    <property type="protein sequence ID" value="CAI55552.1"/>
    <property type="molecule type" value="Genomic_DNA"/>
</dbReference>
<dbReference type="RefSeq" id="WP_011374945.1">
    <property type="nucleotide sequence ID" value="NC_007576.1"/>
</dbReference>
<dbReference type="SMR" id="Q38W81"/>
<dbReference type="STRING" id="314315.LCA_1248"/>
<dbReference type="KEGG" id="lsa:LCA_1248"/>
<dbReference type="eggNOG" id="COG0532">
    <property type="taxonomic scope" value="Bacteria"/>
</dbReference>
<dbReference type="HOGENOM" id="CLU_006301_5_0_9"/>
<dbReference type="OrthoDB" id="9811804at2"/>
<dbReference type="Proteomes" id="UP000002707">
    <property type="component" value="Chromosome"/>
</dbReference>
<dbReference type="GO" id="GO:0005829">
    <property type="term" value="C:cytosol"/>
    <property type="evidence" value="ECO:0007669"/>
    <property type="project" value="TreeGrafter"/>
</dbReference>
<dbReference type="GO" id="GO:0005525">
    <property type="term" value="F:GTP binding"/>
    <property type="evidence" value="ECO:0007669"/>
    <property type="project" value="UniProtKB-KW"/>
</dbReference>
<dbReference type="GO" id="GO:0003924">
    <property type="term" value="F:GTPase activity"/>
    <property type="evidence" value="ECO:0007669"/>
    <property type="project" value="UniProtKB-UniRule"/>
</dbReference>
<dbReference type="GO" id="GO:0003743">
    <property type="term" value="F:translation initiation factor activity"/>
    <property type="evidence" value="ECO:0007669"/>
    <property type="project" value="UniProtKB-UniRule"/>
</dbReference>
<dbReference type="CDD" id="cd01887">
    <property type="entry name" value="IF2_eIF5B"/>
    <property type="match status" value="1"/>
</dbReference>
<dbReference type="CDD" id="cd03702">
    <property type="entry name" value="IF2_mtIF2_II"/>
    <property type="match status" value="1"/>
</dbReference>
<dbReference type="CDD" id="cd03692">
    <property type="entry name" value="mtIF2_IVc"/>
    <property type="match status" value="1"/>
</dbReference>
<dbReference type="FunFam" id="2.40.30.10:FF:000007">
    <property type="entry name" value="Translation initiation factor IF-2"/>
    <property type="match status" value="1"/>
</dbReference>
<dbReference type="FunFam" id="2.40.30.10:FF:000008">
    <property type="entry name" value="Translation initiation factor IF-2"/>
    <property type="match status" value="1"/>
</dbReference>
<dbReference type="FunFam" id="3.40.50.10050:FF:000001">
    <property type="entry name" value="Translation initiation factor IF-2"/>
    <property type="match status" value="1"/>
</dbReference>
<dbReference type="FunFam" id="3.40.50.300:FF:000019">
    <property type="entry name" value="Translation initiation factor IF-2"/>
    <property type="match status" value="1"/>
</dbReference>
<dbReference type="Gene3D" id="1.10.10.2480">
    <property type="match status" value="1"/>
</dbReference>
<dbReference type="Gene3D" id="3.40.50.300">
    <property type="entry name" value="P-loop containing nucleotide triphosphate hydrolases"/>
    <property type="match status" value="1"/>
</dbReference>
<dbReference type="Gene3D" id="2.40.30.10">
    <property type="entry name" value="Translation factors"/>
    <property type="match status" value="2"/>
</dbReference>
<dbReference type="Gene3D" id="3.40.50.10050">
    <property type="entry name" value="Translation initiation factor IF- 2, domain 3"/>
    <property type="match status" value="1"/>
</dbReference>
<dbReference type="HAMAP" id="MF_00100_B">
    <property type="entry name" value="IF_2_B"/>
    <property type="match status" value="1"/>
</dbReference>
<dbReference type="InterPro" id="IPR053905">
    <property type="entry name" value="EF-G-like_DII"/>
</dbReference>
<dbReference type="InterPro" id="IPR044145">
    <property type="entry name" value="IF2_II"/>
</dbReference>
<dbReference type="InterPro" id="IPR006847">
    <property type="entry name" value="IF2_N"/>
</dbReference>
<dbReference type="InterPro" id="IPR027417">
    <property type="entry name" value="P-loop_NTPase"/>
</dbReference>
<dbReference type="InterPro" id="IPR005225">
    <property type="entry name" value="Small_GTP-bd"/>
</dbReference>
<dbReference type="InterPro" id="IPR000795">
    <property type="entry name" value="T_Tr_GTP-bd_dom"/>
</dbReference>
<dbReference type="InterPro" id="IPR000178">
    <property type="entry name" value="TF_IF2_bacterial-like"/>
</dbReference>
<dbReference type="InterPro" id="IPR015760">
    <property type="entry name" value="TIF_IF2"/>
</dbReference>
<dbReference type="InterPro" id="IPR023115">
    <property type="entry name" value="TIF_IF2_dom3"/>
</dbReference>
<dbReference type="InterPro" id="IPR036925">
    <property type="entry name" value="TIF_IF2_dom3_sf"/>
</dbReference>
<dbReference type="InterPro" id="IPR009000">
    <property type="entry name" value="Transl_B-barrel_sf"/>
</dbReference>
<dbReference type="NCBIfam" id="TIGR00487">
    <property type="entry name" value="IF-2"/>
    <property type="match status" value="1"/>
</dbReference>
<dbReference type="NCBIfam" id="TIGR00231">
    <property type="entry name" value="small_GTP"/>
    <property type="match status" value="1"/>
</dbReference>
<dbReference type="PANTHER" id="PTHR43381:SF5">
    <property type="entry name" value="TR-TYPE G DOMAIN-CONTAINING PROTEIN"/>
    <property type="match status" value="1"/>
</dbReference>
<dbReference type="PANTHER" id="PTHR43381">
    <property type="entry name" value="TRANSLATION INITIATION FACTOR IF-2-RELATED"/>
    <property type="match status" value="1"/>
</dbReference>
<dbReference type="Pfam" id="PF22042">
    <property type="entry name" value="EF-G_D2"/>
    <property type="match status" value="1"/>
</dbReference>
<dbReference type="Pfam" id="PF00009">
    <property type="entry name" value="GTP_EFTU"/>
    <property type="match status" value="1"/>
</dbReference>
<dbReference type="Pfam" id="PF11987">
    <property type="entry name" value="IF-2"/>
    <property type="match status" value="1"/>
</dbReference>
<dbReference type="Pfam" id="PF04760">
    <property type="entry name" value="IF2_N"/>
    <property type="match status" value="2"/>
</dbReference>
<dbReference type="SUPFAM" id="SSF52156">
    <property type="entry name" value="Initiation factor IF2/eIF5b, domain 3"/>
    <property type="match status" value="1"/>
</dbReference>
<dbReference type="SUPFAM" id="SSF52540">
    <property type="entry name" value="P-loop containing nucleoside triphosphate hydrolases"/>
    <property type="match status" value="1"/>
</dbReference>
<dbReference type="SUPFAM" id="SSF50447">
    <property type="entry name" value="Translation proteins"/>
    <property type="match status" value="2"/>
</dbReference>
<dbReference type="PROSITE" id="PS51722">
    <property type="entry name" value="G_TR_2"/>
    <property type="match status" value="1"/>
</dbReference>
<dbReference type="PROSITE" id="PS01176">
    <property type="entry name" value="IF2"/>
    <property type="match status" value="1"/>
</dbReference>
<feature type="chain" id="PRO_0000228207" description="Translation initiation factor IF-2">
    <location>
        <begin position="1"/>
        <end position="937"/>
    </location>
</feature>
<feature type="domain" description="tr-type G">
    <location>
        <begin position="438"/>
        <end position="607"/>
    </location>
</feature>
<feature type="region of interest" description="Disordered" evidence="3">
    <location>
        <begin position="47"/>
        <end position="352"/>
    </location>
</feature>
<feature type="region of interest" description="G1" evidence="1">
    <location>
        <begin position="447"/>
        <end position="454"/>
    </location>
</feature>
<feature type="region of interest" description="G2" evidence="1">
    <location>
        <begin position="472"/>
        <end position="476"/>
    </location>
</feature>
<feature type="region of interest" description="G3" evidence="1">
    <location>
        <begin position="493"/>
        <end position="496"/>
    </location>
</feature>
<feature type="region of interest" description="G4" evidence="1">
    <location>
        <begin position="547"/>
        <end position="550"/>
    </location>
</feature>
<feature type="region of interest" description="G5" evidence="1">
    <location>
        <begin position="583"/>
        <end position="585"/>
    </location>
</feature>
<feature type="compositionally biased region" description="Low complexity" evidence="3">
    <location>
        <begin position="52"/>
        <end position="68"/>
    </location>
</feature>
<feature type="compositionally biased region" description="Polar residues" evidence="3">
    <location>
        <begin position="97"/>
        <end position="116"/>
    </location>
</feature>
<feature type="compositionally biased region" description="Low complexity" evidence="3">
    <location>
        <begin position="117"/>
        <end position="153"/>
    </location>
</feature>
<feature type="compositionally biased region" description="Polar residues" evidence="3">
    <location>
        <begin position="154"/>
        <end position="169"/>
    </location>
</feature>
<feature type="compositionally biased region" description="Basic and acidic residues" evidence="3">
    <location>
        <begin position="173"/>
        <end position="197"/>
    </location>
</feature>
<feature type="compositionally biased region" description="Polar residues" evidence="3">
    <location>
        <begin position="202"/>
        <end position="229"/>
    </location>
</feature>
<feature type="compositionally biased region" description="Low complexity" evidence="3">
    <location>
        <begin position="240"/>
        <end position="269"/>
    </location>
</feature>
<feature type="compositionally biased region" description="Polar residues" evidence="3">
    <location>
        <begin position="274"/>
        <end position="298"/>
    </location>
</feature>
<feature type="compositionally biased region" description="Basic residues" evidence="3">
    <location>
        <begin position="322"/>
        <end position="331"/>
    </location>
</feature>
<feature type="compositionally biased region" description="Basic and acidic residues" evidence="3">
    <location>
        <begin position="339"/>
        <end position="352"/>
    </location>
</feature>
<feature type="binding site" evidence="2">
    <location>
        <begin position="447"/>
        <end position="454"/>
    </location>
    <ligand>
        <name>GTP</name>
        <dbReference type="ChEBI" id="CHEBI:37565"/>
    </ligand>
</feature>
<feature type="binding site" evidence="2">
    <location>
        <begin position="493"/>
        <end position="497"/>
    </location>
    <ligand>
        <name>GTP</name>
        <dbReference type="ChEBI" id="CHEBI:37565"/>
    </ligand>
</feature>
<feature type="binding site" evidence="2">
    <location>
        <begin position="547"/>
        <end position="550"/>
    </location>
    <ligand>
        <name>GTP</name>
        <dbReference type="ChEBI" id="CHEBI:37565"/>
    </ligand>
</feature>
<sequence>MGKKRIYELAKEINVASKDILETANKKGYDLKNHMATIDDNQEKTLRAAFQTKATPAASKPATPAAPKASEKSESGKIKINKTAIRRRPEADKKPAQHSNNRPQANANRNGQASNGQNRTNNARPNNNSARPNNSRPNTNSRPNNNSQNRSTSANHPMSLQEQISQANARRQRTQERIQQQREQREADEKKRREQANRPRPTRNNASNNRPSNGKPTNGARPTTNSPRPTVTKDGRPLGSSRPNNNNSARPNTTNNRPTNSRPATTPSRPVSAQEMQQKMQANTVSASKPASNNTASKPKNFGPDKKRGGGYNSYGNSQQRFNKKRKKTRKQQLAEQNAAKKEMPQRKERPLPEVLVFSEGMNVADIAKKIHREPAEIIKKLFMLGIMVNMNQSLDKDTIELLATDYGIEAEQKVEVDIADIDSVFETEAKSDANLVSRPPVVTIMGHVDHGKTTLLDNLRNSHVTDGEAGGITQHIGAYQTKLNDRLITFLDTPGHAAFTNMRARGADITDIIILVVAADDGVMPQTIEAINHAKAAKAPIIVAVNKIDKPGANPDHVMEQLMGYGLVPEDWGGDTIFVKISAKTGENIDDLLEMVLLEADVLELKANRDQKAVGTVIEARLDKGKGPVASLLVQQGTLRIGDPIVVGNTFGRVRVMTNDRGRRVKEVFPSEPVEITGLNDVPQAADRFVVFEDEKTARAAGEERAKRALLKERSRSNPVTLDNLFETMKQGELKEVGVIIKADVQGSTEALAGSLRKIEVEGVRVNIIHEAVGAINESDVTLAAASNAIIIGFNVRPTPQAKIQADAEQVDIRLHRIIYKAIEEIEAAMKGMLEPVYEEKVTGQLTVRETYNVSKIGTIAGCIVDTGVIRRDSGVRLIRDSIVIYEGKLSSLKRFKDDVKEVKTGFECGVTIEDYNDIKIDDQIEAYVMEEVPVK</sequence>
<gene>
    <name evidence="2" type="primary">infB</name>
    <name type="ordered locus">LCA_1248</name>
</gene>
<keyword id="KW-0963">Cytoplasm</keyword>
<keyword id="KW-0342">GTP-binding</keyword>
<keyword id="KW-0396">Initiation factor</keyword>
<keyword id="KW-0547">Nucleotide-binding</keyword>
<keyword id="KW-0648">Protein biosynthesis</keyword>
<keyword id="KW-1185">Reference proteome</keyword>
<proteinExistence type="inferred from homology"/>
<evidence type="ECO:0000250" key="1"/>
<evidence type="ECO:0000255" key="2">
    <source>
        <dbReference type="HAMAP-Rule" id="MF_00100"/>
    </source>
</evidence>
<evidence type="ECO:0000256" key="3">
    <source>
        <dbReference type="SAM" id="MobiDB-lite"/>
    </source>
</evidence>
<comment type="function">
    <text evidence="2">One of the essential components for the initiation of protein synthesis. Protects formylmethionyl-tRNA from spontaneous hydrolysis and promotes its binding to the 30S ribosomal subunits. Also involved in the hydrolysis of GTP during the formation of the 70S ribosomal complex.</text>
</comment>
<comment type="subcellular location">
    <subcellularLocation>
        <location evidence="2">Cytoplasm</location>
    </subcellularLocation>
</comment>
<comment type="similarity">
    <text evidence="2">Belongs to the TRAFAC class translation factor GTPase superfamily. Classic translation factor GTPase family. IF-2 subfamily.</text>
</comment>
<organism>
    <name type="scientific">Latilactobacillus sakei subsp. sakei (strain 23K)</name>
    <name type="common">Lactobacillus sakei subsp. sakei</name>
    <dbReference type="NCBI Taxonomy" id="314315"/>
    <lineage>
        <taxon>Bacteria</taxon>
        <taxon>Bacillati</taxon>
        <taxon>Bacillota</taxon>
        <taxon>Bacilli</taxon>
        <taxon>Lactobacillales</taxon>
        <taxon>Lactobacillaceae</taxon>
        <taxon>Latilactobacillus</taxon>
    </lineage>
</organism>